<organism>
    <name type="scientific">Serratia proteamaculans (strain 568)</name>
    <dbReference type="NCBI Taxonomy" id="399741"/>
    <lineage>
        <taxon>Bacteria</taxon>
        <taxon>Pseudomonadati</taxon>
        <taxon>Pseudomonadota</taxon>
        <taxon>Gammaproteobacteria</taxon>
        <taxon>Enterobacterales</taxon>
        <taxon>Yersiniaceae</taxon>
        <taxon>Serratia</taxon>
    </lineage>
</organism>
<reference key="1">
    <citation type="submission" date="2007-09" db="EMBL/GenBank/DDBJ databases">
        <title>Complete sequence of chromosome of Serratia proteamaculans 568.</title>
        <authorList>
            <consortium name="US DOE Joint Genome Institute"/>
            <person name="Copeland A."/>
            <person name="Lucas S."/>
            <person name="Lapidus A."/>
            <person name="Barry K."/>
            <person name="Glavina del Rio T."/>
            <person name="Dalin E."/>
            <person name="Tice H."/>
            <person name="Pitluck S."/>
            <person name="Chain P."/>
            <person name="Malfatti S."/>
            <person name="Shin M."/>
            <person name="Vergez L."/>
            <person name="Schmutz J."/>
            <person name="Larimer F."/>
            <person name="Land M."/>
            <person name="Hauser L."/>
            <person name="Kyrpides N."/>
            <person name="Kim E."/>
            <person name="Taghavi S."/>
            <person name="Newman L."/>
            <person name="Vangronsveld J."/>
            <person name="van der Lelie D."/>
            <person name="Richardson P."/>
        </authorList>
    </citation>
    <scope>NUCLEOTIDE SEQUENCE [LARGE SCALE GENOMIC DNA]</scope>
    <source>
        <strain>568</strain>
    </source>
</reference>
<proteinExistence type="inferred from homology"/>
<evidence type="ECO:0000255" key="1">
    <source>
        <dbReference type="HAMAP-Rule" id="MF_01042"/>
    </source>
</evidence>
<dbReference type="EC" id="3.1.-.-" evidence="1"/>
<dbReference type="EMBL" id="CP000826">
    <property type="protein sequence ID" value="ABV42474.1"/>
    <property type="molecule type" value="Genomic_DNA"/>
</dbReference>
<dbReference type="SMR" id="A8GH84"/>
<dbReference type="STRING" id="399741.Spro_3376"/>
<dbReference type="KEGG" id="spe:Spro_3376"/>
<dbReference type="eggNOG" id="COG2840">
    <property type="taxonomic scope" value="Bacteria"/>
</dbReference>
<dbReference type="HOGENOM" id="CLU_055978_4_0_6"/>
<dbReference type="OrthoDB" id="5795446at2"/>
<dbReference type="GO" id="GO:0004521">
    <property type="term" value="F:RNA endonuclease activity"/>
    <property type="evidence" value="ECO:0007669"/>
    <property type="project" value="UniProtKB-UniRule"/>
</dbReference>
<dbReference type="GO" id="GO:0019843">
    <property type="term" value="F:rRNA binding"/>
    <property type="evidence" value="ECO:0007669"/>
    <property type="project" value="UniProtKB-UniRule"/>
</dbReference>
<dbReference type="GO" id="GO:0072344">
    <property type="term" value="P:rescue of stalled ribosome"/>
    <property type="evidence" value="ECO:0007669"/>
    <property type="project" value="UniProtKB-UniRule"/>
</dbReference>
<dbReference type="Gene3D" id="3.30.1370.110">
    <property type="match status" value="1"/>
</dbReference>
<dbReference type="HAMAP" id="MF_01042">
    <property type="entry name" value="SmrB"/>
    <property type="match status" value="1"/>
</dbReference>
<dbReference type="InterPro" id="IPR002625">
    <property type="entry name" value="Smr_dom"/>
</dbReference>
<dbReference type="InterPro" id="IPR036063">
    <property type="entry name" value="Smr_dom_sf"/>
</dbReference>
<dbReference type="InterPro" id="IPR022990">
    <property type="entry name" value="SmrB-like"/>
</dbReference>
<dbReference type="NCBIfam" id="NF003432">
    <property type="entry name" value="PRK04946.1"/>
    <property type="match status" value="1"/>
</dbReference>
<dbReference type="PANTHER" id="PTHR35562">
    <property type="entry name" value="DNA ENDONUCLEASE SMRA-RELATED"/>
    <property type="match status" value="1"/>
</dbReference>
<dbReference type="PANTHER" id="PTHR35562:SF1">
    <property type="entry name" value="UPF0115 PROTEIN YFCN"/>
    <property type="match status" value="1"/>
</dbReference>
<dbReference type="Pfam" id="PF01713">
    <property type="entry name" value="Smr"/>
    <property type="match status" value="1"/>
</dbReference>
<dbReference type="SMART" id="SM00463">
    <property type="entry name" value="SMR"/>
    <property type="match status" value="1"/>
</dbReference>
<dbReference type="SUPFAM" id="SSF160443">
    <property type="entry name" value="SMR domain-like"/>
    <property type="match status" value="1"/>
</dbReference>
<dbReference type="PROSITE" id="PS50828">
    <property type="entry name" value="SMR"/>
    <property type="match status" value="1"/>
</dbReference>
<keyword id="KW-0255">Endonuclease</keyword>
<keyword id="KW-0378">Hydrolase</keyword>
<keyword id="KW-0540">Nuclease</keyword>
<keyword id="KW-0694">RNA-binding</keyword>
<keyword id="KW-0699">rRNA-binding</keyword>
<name>SMRB_SERP5</name>
<feature type="chain" id="PRO_1000084357" description="Ribosome rescue factor SmrB">
    <location>
        <begin position="1"/>
        <end position="176"/>
    </location>
</feature>
<feature type="domain" description="Smr" evidence="1">
    <location>
        <begin position="98"/>
        <end position="173"/>
    </location>
</feature>
<protein>
    <recommendedName>
        <fullName evidence="1">Ribosome rescue factor SmrB</fullName>
        <ecNumber evidence="1">3.1.-.-</ecNumber>
    </recommendedName>
</protein>
<gene>
    <name evidence="1" type="primary">smrB</name>
    <name type="ordered locus">Spro_3376</name>
</gene>
<sequence length="176" mass="20268">MKNKHPLSKDELQLFRESVVDAKKLRQDTIVHRKPKPKTKQIAPQRLLQEQVDASHYFSDEYQPQLEEEGPTRYVRPGYSAFELKKLRRGDYSPELFLDLHGLTQMQAKQELGALIAACRREHVHCACVMHGHGKHILKQQTPLWLAQHPDVLVFHQAPKEWGGTAAILLLVELAE</sequence>
<comment type="function">
    <text evidence="1">Acts as a ribosome collision sensor. Detects stalled/collided disomes (pairs of ribosomes where the leading ribosome is stalled and a second ribosome has collided with it) and endonucleolytically cleaves mRNA at the 5' boundary of the stalled ribosome. Stalled/collided disomes form a new interface (primarily via the 30S subunits) that binds SmrB. Cleaved mRNA becomes available for tmRNA ligation, leading to ribosomal subunit dissociation and rescue of stalled ribosomes.</text>
</comment>
<comment type="subunit">
    <text evidence="1">Associates with collided ribosomes, but not with correctly translating polysomes.</text>
</comment>
<comment type="similarity">
    <text evidence="1">Belongs to the SmrB family.</text>
</comment>
<accession>A8GH84</accession>